<sequence length="730" mass="80421">MVKFKSTEQVLKIIKNKDQIRNFGVIAHVDHGKTTMSDSLLAHSGIIAPSAAGQALAMDFDKEEQERGITIYQANVTLHYTQKEDEYVINMIDTPGHVDFSGRVIRSLRAIDGAVVVCDAVEGIMTQTETVTRMALEELVRPVLFINKVDRLIKELRLTPEKMQETLASVVSNFNQLLDTYAEPEYRDAWKVSIQDASVTFGSAKDKWAINVDVMKEKGITFKDVIDAYSEGKVDELVERAPLADAVLGMVVKHHPPPHVAQKYRIPKIWHGDLESDIGKALLACKDDGPTIMMVVNMVLDKAAGSVAIGRLFSGTIRDGQTVNIIDAKREGRVQSVNFFMGNQREQVGELGAGNIPALIGLADSRAGNTLSSIAGIKVFEGVSYVSEPVVQIAVEPKHPKDLPRLVEVLKQLTIEDPNLVVKIDEESGETIVSGMGVLHLDVATHRIQDAKVEIITSEPLINYRETVSSGCEAVMSKSPNRHNKIFMRVEPLEPTIGDMLRSGRISEMKDKKEMADLLKEQGWDTDTVKRVMKLDPRGNVMINGTKGVQFVQESTDSINSGFDDAMKEGPMCREQMRDCKFTFTHFVPHEDAAHRGLSQLGPASRRACMGALLTAGTSLLEPILAIEVRVPTDMVGNVATVLSSKSGKVMDMIQKGPASIVTGEIPASETFTLSEEMRGQTAGKAMWNSHFKRWAEVPKSRLAESISDIRKRKGLAPDPPTVSEFIDRE</sequence>
<accession>A0RW30</accession>
<gene>
    <name evidence="1" type="primary">fusA</name>
    <name type="ordered locus">CENSYa_0915</name>
</gene>
<proteinExistence type="inferred from homology"/>
<comment type="function">
    <text evidence="1">Catalyzes the GTP-dependent ribosomal translocation step during translation elongation. During this step, the ribosome changes from the pre-translocational (PRE) to the post-translocational (POST) state as the newly formed A-site-bound peptidyl-tRNA and P-site-bound deacylated tRNA move to the P and E sites, respectively. Catalyzes the coordinated movement of the two tRNA molecules, the mRNA and conformational changes in the ribosome.</text>
</comment>
<comment type="subcellular location">
    <subcellularLocation>
        <location evidence="1">Cytoplasm</location>
    </subcellularLocation>
</comment>
<comment type="similarity">
    <text evidence="1">Belongs to the TRAFAC class translation factor GTPase superfamily. Classic translation factor GTPase family. EF-G/EF-2 subfamily.</text>
</comment>
<dbReference type="EMBL" id="DP000238">
    <property type="protein sequence ID" value="ABK77547.1"/>
    <property type="molecule type" value="Genomic_DNA"/>
</dbReference>
<dbReference type="SMR" id="A0RW30"/>
<dbReference type="STRING" id="414004.CENSYa_0915"/>
<dbReference type="EnsemblBacteria" id="ABK77547">
    <property type="protein sequence ID" value="ABK77547"/>
    <property type="gene ID" value="CENSYa_0915"/>
</dbReference>
<dbReference type="KEGG" id="csy:CENSYa_0915"/>
<dbReference type="PATRIC" id="fig|414004.10.peg.846"/>
<dbReference type="HOGENOM" id="CLU_002794_11_1_2"/>
<dbReference type="Proteomes" id="UP000000758">
    <property type="component" value="Chromosome"/>
</dbReference>
<dbReference type="GO" id="GO:0005829">
    <property type="term" value="C:cytosol"/>
    <property type="evidence" value="ECO:0007669"/>
    <property type="project" value="TreeGrafter"/>
</dbReference>
<dbReference type="GO" id="GO:1990904">
    <property type="term" value="C:ribonucleoprotein complex"/>
    <property type="evidence" value="ECO:0007669"/>
    <property type="project" value="TreeGrafter"/>
</dbReference>
<dbReference type="GO" id="GO:0005525">
    <property type="term" value="F:GTP binding"/>
    <property type="evidence" value="ECO:0007669"/>
    <property type="project" value="UniProtKB-UniRule"/>
</dbReference>
<dbReference type="GO" id="GO:0003924">
    <property type="term" value="F:GTPase activity"/>
    <property type="evidence" value="ECO:0007669"/>
    <property type="project" value="InterPro"/>
</dbReference>
<dbReference type="GO" id="GO:0003746">
    <property type="term" value="F:translation elongation factor activity"/>
    <property type="evidence" value="ECO:0007669"/>
    <property type="project" value="UniProtKB-UniRule"/>
</dbReference>
<dbReference type="CDD" id="cd01681">
    <property type="entry name" value="aeEF2_snRNP_like_IV"/>
    <property type="match status" value="1"/>
</dbReference>
<dbReference type="CDD" id="cd01885">
    <property type="entry name" value="EF2"/>
    <property type="match status" value="1"/>
</dbReference>
<dbReference type="CDD" id="cd16268">
    <property type="entry name" value="EF2_II"/>
    <property type="match status" value="1"/>
</dbReference>
<dbReference type="CDD" id="cd16261">
    <property type="entry name" value="EF2_snRNP_III"/>
    <property type="match status" value="1"/>
</dbReference>
<dbReference type="FunFam" id="3.30.70.870:FF:000002">
    <property type="entry name" value="Translation elongation factor 2"/>
    <property type="match status" value="1"/>
</dbReference>
<dbReference type="Gene3D" id="3.30.230.10">
    <property type="match status" value="1"/>
</dbReference>
<dbReference type="Gene3D" id="3.30.70.240">
    <property type="match status" value="1"/>
</dbReference>
<dbReference type="Gene3D" id="3.30.70.870">
    <property type="entry name" value="Elongation Factor G (Translational Gtpase), domain 3"/>
    <property type="match status" value="1"/>
</dbReference>
<dbReference type="Gene3D" id="3.40.50.300">
    <property type="entry name" value="P-loop containing nucleotide triphosphate hydrolases"/>
    <property type="match status" value="1"/>
</dbReference>
<dbReference type="Gene3D" id="2.40.30.10">
    <property type="entry name" value="Translation factors"/>
    <property type="match status" value="1"/>
</dbReference>
<dbReference type="HAMAP" id="MF_00054_A">
    <property type="entry name" value="EF_G_EF_2_A"/>
    <property type="match status" value="1"/>
</dbReference>
<dbReference type="InterPro" id="IPR053905">
    <property type="entry name" value="EF-G-like_DII"/>
</dbReference>
<dbReference type="InterPro" id="IPR041095">
    <property type="entry name" value="EFG_II"/>
</dbReference>
<dbReference type="InterPro" id="IPR035647">
    <property type="entry name" value="EFG_III/V"/>
</dbReference>
<dbReference type="InterPro" id="IPR000640">
    <property type="entry name" value="EFG_V-like"/>
</dbReference>
<dbReference type="InterPro" id="IPR031157">
    <property type="entry name" value="G_TR_CS"/>
</dbReference>
<dbReference type="InterPro" id="IPR027417">
    <property type="entry name" value="P-loop_NTPase"/>
</dbReference>
<dbReference type="InterPro" id="IPR020568">
    <property type="entry name" value="Ribosomal_Su5_D2-typ_SF"/>
</dbReference>
<dbReference type="InterPro" id="IPR014721">
    <property type="entry name" value="Ribsml_uS5_D2-typ_fold_subgr"/>
</dbReference>
<dbReference type="InterPro" id="IPR005225">
    <property type="entry name" value="Small_GTP-bd"/>
</dbReference>
<dbReference type="InterPro" id="IPR000795">
    <property type="entry name" value="T_Tr_GTP-bd_dom"/>
</dbReference>
<dbReference type="InterPro" id="IPR009000">
    <property type="entry name" value="Transl_B-barrel_sf"/>
</dbReference>
<dbReference type="InterPro" id="IPR004543">
    <property type="entry name" value="Transl_elong_EFG/EF2_arc"/>
</dbReference>
<dbReference type="InterPro" id="IPR005517">
    <property type="entry name" value="Transl_elong_EFG/EF2_IV"/>
</dbReference>
<dbReference type="NCBIfam" id="TIGR00490">
    <property type="entry name" value="aEF-2"/>
    <property type="match status" value="1"/>
</dbReference>
<dbReference type="NCBIfam" id="TIGR00231">
    <property type="entry name" value="small_GTP"/>
    <property type="match status" value="1"/>
</dbReference>
<dbReference type="PANTHER" id="PTHR42908:SF3">
    <property type="entry name" value="ELONGATION FACTOR-LIKE GTPASE 1"/>
    <property type="match status" value="1"/>
</dbReference>
<dbReference type="PANTHER" id="PTHR42908">
    <property type="entry name" value="TRANSLATION ELONGATION FACTOR-RELATED"/>
    <property type="match status" value="1"/>
</dbReference>
<dbReference type="Pfam" id="PF22042">
    <property type="entry name" value="EF-G_D2"/>
    <property type="match status" value="1"/>
</dbReference>
<dbReference type="Pfam" id="PF00679">
    <property type="entry name" value="EFG_C"/>
    <property type="match status" value="1"/>
</dbReference>
<dbReference type="Pfam" id="PF14492">
    <property type="entry name" value="EFG_III"/>
    <property type="match status" value="1"/>
</dbReference>
<dbReference type="Pfam" id="PF03764">
    <property type="entry name" value="EFG_IV"/>
    <property type="match status" value="1"/>
</dbReference>
<dbReference type="Pfam" id="PF00009">
    <property type="entry name" value="GTP_EFTU"/>
    <property type="match status" value="1"/>
</dbReference>
<dbReference type="PRINTS" id="PR00315">
    <property type="entry name" value="ELONGATNFCT"/>
</dbReference>
<dbReference type="SMART" id="SM00838">
    <property type="entry name" value="EFG_C"/>
    <property type="match status" value="1"/>
</dbReference>
<dbReference type="SMART" id="SM00889">
    <property type="entry name" value="EFG_IV"/>
    <property type="match status" value="1"/>
</dbReference>
<dbReference type="SUPFAM" id="SSF54980">
    <property type="entry name" value="EF-G C-terminal domain-like"/>
    <property type="match status" value="2"/>
</dbReference>
<dbReference type="SUPFAM" id="SSF52540">
    <property type="entry name" value="P-loop containing nucleoside triphosphate hydrolases"/>
    <property type="match status" value="1"/>
</dbReference>
<dbReference type="SUPFAM" id="SSF54211">
    <property type="entry name" value="Ribosomal protein S5 domain 2-like"/>
    <property type="match status" value="1"/>
</dbReference>
<dbReference type="SUPFAM" id="SSF50447">
    <property type="entry name" value="Translation proteins"/>
    <property type="match status" value="1"/>
</dbReference>
<dbReference type="PROSITE" id="PS00301">
    <property type="entry name" value="G_TR_1"/>
    <property type="match status" value="1"/>
</dbReference>
<dbReference type="PROSITE" id="PS51722">
    <property type="entry name" value="G_TR_2"/>
    <property type="match status" value="1"/>
</dbReference>
<keyword id="KW-0963">Cytoplasm</keyword>
<keyword id="KW-0251">Elongation factor</keyword>
<keyword id="KW-0342">GTP-binding</keyword>
<keyword id="KW-0547">Nucleotide-binding</keyword>
<keyword id="KW-0648">Protein biosynthesis</keyword>
<keyword id="KW-1185">Reference proteome</keyword>
<reference key="1">
    <citation type="journal article" date="2006" name="Proc. Natl. Acad. Sci. U.S.A.">
        <title>Genomic analysis of the uncultivated marine crenarchaeote Cenarchaeum symbiosum.</title>
        <authorList>
            <person name="Hallam S.J."/>
            <person name="Konstantinidis K.T."/>
            <person name="Putnam N."/>
            <person name="Schleper C."/>
            <person name="Watanabe Y."/>
            <person name="Sugahara J."/>
            <person name="Preston C."/>
            <person name="de la Torre J."/>
            <person name="Richardson P.M."/>
            <person name="DeLong E.F."/>
        </authorList>
    </citation>
    <scope>NUCLEOTIDE SEQUENCE [LARGE SCALE GENOMIC DNA]</scope>
    <source>
        <strain>A</strain>
    </source>
</reference>
<feature type="chain" id="PRO_0000408958" description="Elongation factor 2">
    <location>
        <begin position="1"/>
        <end position="730"/>
    </location>
</feature>
<feature type="domain" description="tr-type G">
    <location>
        <begin position="18"/>
        <end position="238"/>
    </location>
</feature>
<feature type="region of interest" description="Disordered" evidence="2">
    <location>
        <begin position="711"/>
        <end position="730"/>
    </location>
</feature>
<feature type="binding site" evidence="1">
    <location>
        <begin position="27"/>
        <end position="34"/>
    </location>
    <ligand>
        <name>GTP</name>
        <dbReference type="ChEBI" id="CHEBI:37565"/>
    </ligand>
</feature>
<feature type="binding site" evidence="1">
    <location>
        <begin position="93"/>
        <end position="97"/>
    </location>
    <ligand>
        <name>GTP</name>
        <dbReference type="ChEBI" id="CHEBI:37565"/>
    </ligand>
</feature>
<feature type="binding site" evidence="1">
    <location>
        <begin position="147"/>
        <end position="150"/>
    </location>
    <ligand>
        <name>GTP</name>
        <dbReference type="ChEBI" id="CHEBI:37565"/>
    </ligand>
</feature>
<feature type="modified residue" description="Diphthamide" evidence="1">
    <location>
        <position position="595"/>
    </location>
</feature>
<protein>
    <recommendedName>
        <fullName evidence="1">Elongation factor 2</fullName>
        <shortName evidence="1">EF-2</shortName>
    </recommendedName>
</protein>
<organism>
    <name type="scientific">Cenarchaeum symbiosum (strain A)</name>
    <dbReference type="NCBI Taxonomy" id="414004"/>
    <lineage>
        <taxon>Archaea</taxon>
        <taxon>Nitrososphaerota</taxon>
        <taxon>Candidatus Cenarchaeales</taxon>
        <taxon>Candidatus Cenarchaeaceae</taxon>
        <taxon>Candidatus Cenarchaeum</taxon>
    </lineage>
</organism>
<evidence type="ECO:0000255" key="1">
    <source>
        <dbReference type="HAMAP-Rule" id="MF_00054"/>
    </source>
</evidence>
<evidence type="ECO:0000256" key="2">
    <source>
        <dbReference type="SAM" id="MobiDB-lite"/>
    </source>
</evidence>
<name>EF2_CENSY</name>